<protein>
    <recommendedName>
        <fullName evidence="7">ABC transporter G family member 45</fullName>
        <shortName evidence="7">OsABCG45</shortName>
    </recommendedName>
    <alternativeName>
        <fullName evidence="5 6">Pleiotropic drug resistance protein 1</fullName>
        <shortName evidence="6">OsPDR1</shortName>
    </alternativeName>
</protein>
<reference key="1">
    <citation type="journal article" date="2003" name="Plant Physiol.">
        <title>The ATP-binding cassette transporters: structure, function, and gene family comparison between rice and Arabidopsis.</title>
        <authorList>
            <person name="Jasinski M."/>
            <person name="Ducos E."/>
            <person name="Martinoia E."/>
            <person name="Boutry M."/>
        </authorList>
    </citation>
    <scope>NUCLEOTIDE SEQUENCE [GENOMIC DNA]</scope>
    <source>
        <strain>cv. Nipponbare</strain>
    </source>
</reference>
<reference key="2">
    <citation type="journal article" date="2005" name="Nature">
        <title>The map-based sequence of the rice genome.</title>
        <authorList>
            <consortium name="International rice genome sequencing project (IRGSP)"/>
        </authorList>
    </citation>
    <scope>NUCLEOTIDE SEQUENCE [LARGE SCALE GENOMIC DNA]</scope>
    <source>
        <strain>cv. Nipponbare</strain>
    </source>
</reference>
<reference key="3">
    <citation type="journal article" date="2008" name="Nucleic Acids Res.">
        <title>The rice annotation project database (RAP-DB): 2008 update.</title>
        <authorList>
            <consortium name="The rice annotation project (RAP)"/>
        </authorList>
    </citation>
    <scope>GENOME REANNOTATION</scope>
    <source>
        <strain>cv. Nipponbare</strain>
    </source>
</reference>
<reference key="4">
    <citation type="journal article" date="2013" name="Rice">
        <title>Improvement of the Oryza sativa Nipponbare reference genome using next generation sequence and optical map data.</title>
        <authorList>
            <person name="Kawahara Y."/>
            <person name="de la Bastide M."/>
            <person name="Hamilton J.P."/>
            <person name="Kanamori H."/>
            <person name="McCombie W.R."/>
            <person name="Ouyang S."/>
            <person name="Schwartz D.C."/>
            <person name="Tanaka T."/>
            <person name="Wu J."/>
            <person name="Zhou S."/>
            <person name="Childs K.L."/>
            <person name="Davidson R.M."/>
            <person name="Lin H."/>
            <person name="Quesada-Ocampo L."/>
            <person name="Vaillancourt B."/>
            <person name="Sakai H."/>
            <person name="Lee S.S."/>
            <person name="Kim J."/>
            <person name="Numa H."/>
            <person name="Itoh T."/>
            <person name="Buell C.R."/>
            <person name="Matsumoto T."/>
        </authorList>
    </citation>
    <scope>GENOME REANNOTATION</scope>
    <source>
        <strain>cv. Nipponbare</strain>
    </source>
</reference>
<reference key="5">
    <citation type="journal article" date="2003" name="Science">
        <title>Collection, mapping, and annotation of over 28,000 cDNA clones from japonica rice.</title>
        <authorList>
            <consortium name="The rice full-length cDNA consortium"/>
        </authorList>
    </citation>
    <scope>NUCLEOTIDE SEQUENCE [LARGE SCALE MRNA] OF 876-1350</scope>
    <source>
        <strain>cv. Nipponbare</strain>
    </source>
</reference>
<reference key="6">
    <citation type="journal article" date="2006" name="FEBS Lett.">
        <title>Organization and function of the plant pleiotropic drug resistance ABC transporter family.</title>
        <authorList>
            <person name="Crouzet J."/>
            <person name="Trombik T."/>
            <person name="Fraysse A.S."/>
            <person name="Boutry M."/>
        </authorList>
    </citation>
    <scope>GENE FAMILY</scope>
    <scope>NOMENCLATURE</scope>
</reference>
<reference key="7">
    <citation type="journal article" date="2008" name="Trends Plant Sci.">
        <title>Plant ABC proteins - a unified nomenclature and updated inventory.</title>
        <authorList>
            <person name="Verrier P.J."/>
            <person name="Bird D."/>
            <person name="Burla B."/>
            <person name="Dassa E."/>
            <person name="Forestier C."/>
            <person name="Geisler M."/>
            <person name="Klein M."/>
            <person name="Kolukisaoglu H.U."/>
            <person name="Lee Y."/>
            <person name="Martinoia E."/>
            <person name="Murphy A."/>
            <person name="Rea P.A."/>
            <person name="Samuels L."/>
            <person name="Schulz B."/>
            <person name="Spalding E.J."/>
            <person name="Yazaki K."/>
            <person name="Theodoulou F.L."/>
        </authorList>
    </citation>
    <scope>GENE FAMILY</scope>
    <scope>NOMENCLATURE</scope>
</reference>
<name>AB45G_ORYSJ</name>
<dbReference type="EMBL" id="AJ535054">
    <property type="protein sequence ID" value="CAD59576.1"/>
    <property type="status" value="ALT_SEQ"/>
    <property type="molecule type" value="Genomic_DNA"/>
</dbReference>
<dbReference type="EMBL" id="AP004632">
    <property type="protein sequence ID" value="BAD09728.1"/>
    <property type="status" value="ALT_SEQ"/>
    <property type="molecule type" value="Genomic_DNA"/>
</dbReference>
<dbReference type="EMBL" id="AP008214">
    <property type="protein sequence ID" value="BAF24319.1"/>
    <property type="status" value="ALT_SEQ"/>
    <property type="molecule type" value="Genomic_DNA"/>
</dbReference>
<dbReference type="EMBL" id="AP014964">
    <property type="status" value="NOT_ANNOTATED_CDS"/>
    <property type="molecule type" value="Genomic_DNA"/>
</dbReference>
<dbReference type="EMBL" id="AK107688">
    <property type="status" value="NOT_ANNOTATED_CDS"/>
    <property type="molecule type" value="mRNA"/>
</dbReference>
<dbReference type="RefSeq" id="XP_015649925.1">
    <property type="nucleotide sequence ID" value="XM_015794439.1"/>
</dbReference>
<dbReference type="SMR" id="Q8GU82"/>
<dbReference type="FunCoup" id="Q8GU82">
    <property type="interactions" value="102"/>
</dbReference>
<dbReference type="STRING" id="39947.Q8GU82"/>
<dbReference type="PaxDb" id="39947-Q8GU82"/>
<dbReference type="EnsemblPlants" id="Os08t0544400-01">
    <property type="protein sequence ID" value="Os08t0544400-01"/>
    <property type="gene ID" value="Os08g0544400"/>
</dbReference>
<dbReference type="Gramene" id="Os08t0544400-01">
    <property type="protein sequence ID" value="Os08t0544400-01"/>
    <property type="gene ID" value="Os08g0544400"/>
</dbReference>
<dbReference type="KEGG" id="dosa:Os08g0544400"/>
<dbReference type="eggNOG" id="KOG0065">
    <property type="taxonomic scope" value="Eukaryota"/>
</dbReference>
<dbReference type="InParanoid" id="Q8GU82"/>
<dbReference type="OrthoDB" id="66620at2759"/>
<dbReference type="Proteomes" id="UP000000763">
    <property type="component" value="Chromosome 8"/>
</dbReference>
<dbReference type="Proteomes" id="UP000059680">
    <property type="component" value="Chromosome 8"/>
</dbReference>
<dbReference type="GO" id="GO:0016020">
    <property type="term" value="C:membrane"/>
    <property type="evidence" value="ECO:0007669"/>
    <property type="project" value="UniProtKB-SubCell"/>
</dbReference>
<dbReference type="GO" id="GO:0140359">
    <property type="term" value="F:ABC-type transporter activity"/>
    <property type="evidence" value="ECO:0007669"/>
    <property type="project" value="InterPro"/>
</dbReference>
<dbReference type="GO" id="GO:0005524">
    <property type="term" value="F:ATP binding"/>
    <property type="evidence" value="ECO:0007669"/>
    <property type="project" value="UniProtKB-KW"/>
</dbReference>
<dbReference type="GO" id="GO:0016887">
    <property type="term" value="F:ATP hydrolysis activity"/>
    <property type="evidence" value="ECO:0007669"/>
    <property type="project" value="InterPro"/>
</dbReference>
<dbReference type="CDD" id="cd03232">
    <property type="entry name" value="ABCG_PDR_domain2"/>
    <property type="match status" value="1"/>
</dbReference>
<dbReference type="FunFam" id="3.40.50.300:FF:000157">
    <property type="entry name" value="ABC transporter G family member 34"/>
    <property type="match status" value="1"/>
</dbReference>
<dbReference type="FunFam" id="3.40.50.300:FF:000532">
    <property type="entry name" value="ABC transporter G family member 34"/>
    <property type="match status" value="1"/>
</dbReference>
<dbReference type="Gene3D" id="3.40.50.300">
    <property type="entry name" value="P-loop containing nucleotide triphosphate hydrolases"/>
    <property type="match status" value="2"/>
</dbReference>
<dbReference type="InterPro" id="IPR003593">
    <property type="entry name" value="AAA+_ATPase"/>
</dbReference>
<dbReference type="InterPro" id="IPR013525">
    <property type="entry name" value="ABC2_TM"/>
</dbReference>
<dbReference type="InterPro" id="IPR003439">
    <property type="entry name" value="ABC_transporter-like_ATP-bd"/>
</dbReference>
<dbReference type="InterPro" id="IPR017871">
    <property type="entry name" value="ABC_transporter-like_CS"/>
</dbReference>
<dbReference type="InterPro" id="IPR043926">
    <property type="entry name" value="ABCG_dom"/>
</dbReference>
<dbReference type="InterPro" id="IPR034003">
    <property type="entry name" value="ABCG_PDR_2"/>
</dbReference>
<dbReference type="InterPro" id="IPR027417">
    <property type="entry name" value="P-loop_NTPase"/>
</dbReference>
<dbReference type="InterPro" id="IPR013581">
    <property type="entry name" value="PDR_assoc"/>
</dbReference>
<dbReference type="PANTHER" id="PTHR48040:SF64">
    <property type="entry name" value="ABC TRANSPORTER DOMAIN-CONTAINING PROTEIN"/>
    <property type="match status" value="1"/>
</dbReference>
<dbReference type="PANTHER" id="PTHR48040">
    <property type="entry name" value="PLEIOTROPIC DRUG RESISTANCE PROTEIN 1-LIKE ISOFORM X1"/>
    <property type="match status" value="1"/>
</dbReference>
<dbReference type="Pfam" id="PF01061">
    <property type="entry name" value="ABC2_membrane"/>
    <property type="match status" value="2"/>
</dbReference>
<dbReference type="Pfam" id="PF19055">
    <property type="entry name" value="ABC2_membrane_7"/>
    <property type="match status" value="1"/>
</dbReference>
<dbReference type="Pfam" id="PF00005">
    <property type="entry name" value="ABC_tran"/>
    <property type="match status" value="2"/>
</dbReference>
<dbReference type="Pfam" id="PF08370">
    <property type="entry name" value="PDR_assoc"/>
    <property type="match status" value="1"/>
</dbReference>
<dbReference type="SMART" id="SM00382">
    <property type="entry name" value="AAA"/>
    <property type="match status" value="2"/>
</dbReference>
<dbReference type="SUPFAM" id="SSF52540">
    <property type="entry name" value="P-loop containing nucleoside triphosphate hydrolases"/>
    <property type="match status" value="2"/>
</dbReference>
<dbReference type="PROSITE" id="PS00211">
    <property type="entry name" value="ABC_TRANSPORTER_1"/>
    <property type="match status" value="1"/>
</dbReference>
<dbReference type="PROSITE" id="PS50893">
    <property type="entry name" value="ABC_TRANSPORTER_2"/>
    <property type="match status" value="2"/>
</dbReference>
<evidence type="ECO:0000250" key="1"/>
<evidence type="ECO:0000255" key="2"/>
<evidence type="ECO:0000255" key="3">
    <source>
        <dbReference type="PROSITE-ProRule" id="PRU00434"/>
    </source>
</evidence>
<evidence type="ECO:0000256" key="4">
    <source>
        <dbReference type="SAM" id="MobiDB-lite"/>
    </source>
</evidence>
<evidence type="ECO:0000303" key="5">
    <source>
    </source>
</evidence>
<evidence type="ECO:0000303" key="6">
    <source>
    </source>
</evidence>
<evidence type="ECO:0000303" key="7">
    <source>
    </source>
</evidence>
<evidence type="ECO:0000305" key="8"/>
<evidence type="ECO:0000312" key="9">
    <source>
        <dbReference type="EMBL" id="BAD09728.1"/>
    </source>
</evidence>
<evidence type="ECO:0000312" key="10">
    <source>
        <dbReference type="EMBL" id="BAF24319.1"/>
    </source>
</evidence>
<keyword id="KW-0067">ATP-binding</keyword>
<keyword id="KW-0472">Membrane</keyword>
<keyword id="KW-0547">Nucleotide-binding</keyword>
<keyword id="KW-1185">Reference proteome</keyword>
<keyword id="KW-0677">Repeat</keyword>
<keyword id="KW-0812">Transmembrane</keyword>
<keyword id="KW-1133">Transmembrane helix</keyword>
<keyword id="KW-0813">Transport</keyword>
<proteinExistence type="evidence at transcript level"/>
<organism>
    <name type="scientific">Oryza sativa subsp. japonica</name>
    <name type="common">Rice</name>
    <dbReference type="NCBI Taxonomy" id="39947"/>
    <lineage>
        <taxon>Eukaryota</taxon>
        <taxon>Viridiplantae</taxon>
        <taxon>Streptophyta</taxon>
        <taxon>Embryophyta</taxon>
        <taxon>Tracheophyta</taxon>
        <taxon>Spermatophyta</taxon>
        <taxon>Magnoliopsida</taxon>
        <taxon>Liliopsida</taxon>
        <taxon>Poales</taxon>
        <taxon>Poaceae</taxon>
        <taxon>BOP clade</taxon>
        <taxon>Oryzoideae</taxon>
        <taxon>Oryzeae</taxon>
        <taxon>Oryzinae</taxon>
        <taxon>Oryza</taxon>
        <taxon>Oryza sativa</taxon>
    </lineage>
</organism>
<comment type="function">
    <text evidence="1">May be a general defense protein.</text>
</comment>
<comment type="subcellular location">
    <subcellularLocation>
        <location evidence="2">Membrane</location>
        <topology evidence="2">Multi-pass membrane protein</topology>
    </subcellularLocation>
</comment>
<comment type="similarity">
    <text evidence="8">Belongs to the ABC transporter superfamily. ABCG family. PDR (TC 3.A.1.205) subfamily.</text>
</comment>
<comment type="sequence caution" evidence="8">
    <conflict type="erroneous gene model prediction">
        <sequence resource="EMBL-CDS" id="BAD09728"/>
    </conflict>
</comment>
<comment type="sequence caution" evidence="8">
    <conflict type="erroneous gene model prediction">
        <sequence resource="EMBL-CDS" id="BAF24319"/>
    </conflict>
</comment>
<comment type="sequence caution" evidence="8">
    <conflict type="erroneous gene model prediction">
        <sequence resource="EMBL-CDS" id="CAD59576"/>
    </conflict>
</comment>
<sequence length="1350" mass="152556">MAAAVELTGDGGTTAETRWLSPPLTHDDNRGFLQMLREKKERLGVGAAKVEVRLEKLTVEADVRVGRRAVPTLLNCAINAAQELAACAHMCTTRKKPMKIINEATGTIRPSRMTLLLGAPGSGKTTLLKALAGKLDSSLKMKGKVTYNGEEVNSSTPQYLHAYVSQYDLHHAEMTVRETIDFSSKMLGTNNEFEMLGEAIRRKKGVINRVDQELDSFIKATTFGEGSNLTTNYIIKILGLSECADTLVGDEMRRGISGGQKKRATIGEMLVGLARCFFMDDISTGLDSSTTFEIMKFLQQMAHLMDLTMVISLLQPPPETLELFDDIILLCEGQIVYHGPRENATDFFETMGFKCPSRKNVADFLQEVTSKMDQKQYWIGNANKYQYHSIEKFAESFRTSYLPRLVENDHFESTNAGKSKEVKTSTSRMISSWNIFKACFSREVLLLKRNSPVHIFKTIQITVLALVISTLFLRTNMRHDTVLDANKYMGALFMAVVIVNFNGMTEIAMTIKRLPIFYKQREILALPGWALLSSVFLLSLPISFVETGLWTGLTYYVIGYAPSFVRFIQHFVVLFAMHQMSMSLYRFLAAIGRTQVMANMLGTAALIAIYILGGFVISKDNLQPWLRWGYWTSPFTYAQNAVALNEFLDDRWATEFHFANANTVGETILKVRGLLTEWHWYWICVSILFGFSLVFNILSIFALQYMRSPHKHQVNINATKVKVDYNSQIVGNGTASTDQVILPFQPLSLVFDHINYFVDMPKEMTKYGVTDKKLQLLQDVSGAFRPGVLTALMGITGAGKTTLLDVLAGRKTGGYIEGTVKIAGYPKKQETFSRISGYCEQSDIHSPNLTVYESLQFSAWLRLPSNVKSHQRNMFIDEVMDLVELTGLKNAMVGLAGATGLSAEQRKRLTIAVELVASPSIIFMDEPTTGLDARAAAIVMRTVRKTVDTGRTVVCTIHQPSIEIFESFDELLLMKRGGQLIYSGSLGPLSSNMIKYFEAIPGVPRIKEGQNPAAWMLDISSRTAEYEIGVDYAEIYQRSSLYWENRQLIDDLGKPEPNTEDLHFPPKYWQDFRAQCMACLWKQNCAYWKNSEHNVVRFINTFAVSIMFGIVFWKIGSTIKDEQDVFNILGVVYGSALFLGFMNCSILQPVVGMERVVLYREKAAGMYSTMAYAIAQVAVELPYMFVQVFIFSAIVYPMIGFQMTATKFFWFALYMVLSFLYYTLYGMMTVALTPNIEIAAGLSFLIFIFWNVFSGFIIGRQMIPVWWRWVYWANPAAWTVYGLMFSQLGDRTELIQVPGQPEQTVKEFLEGYLGLQDRYFNLVTSLHVAIIALFTFLFFLSIKHLKFQRR</sequence>
<accession>Q8GU82</accession>
<accession>Q0J3Z6</accession>
<accession>Q6ZBI0</accession>
<feature type="chain" id="PRO_0000433455" description="ABC transporter G family member 45">
    <location>
        <begin position="1"/>
        <end position="1350"/>
    </location>
</feature>
<feature type="transmembrane region" description="Helical" evidence="2">
    <location>
        <begin position="453"/>
        <end position="473"/>
    </location>
</feature>
<feature type="transmembrane region" description="Helical" evidence="2">
    <location>
        <begin position="491"/>
        <end position="511"/>
    </location>
</feature>
<feature type="transmembrane region" description="Helical" evidence="2">
    <location>
        <begin position="523"/>
        <end position="543"/>
    </location>
</feature>
<feature type="transmembrane region" description="Helical" evidence="2">
    <location>
        <begin position="557"/>
        <end position="577"/>
    </location>
</feature>
<feature type="transmembrane region" description="Helical" evidence="2">
    <location>
        <begin position="597"/>
        <end position="617"/>
    </location>
</feature>
<feature type="transmembrane region" description="Helical" evidence="2">
    <location>
        <begin position="683"/>
        <end position="703"/>
    </location>
</feature>
<feature type="transmembrane region" description="Helical" evidence="2">
    <location>
        <begin position="1099"/>
        <end position="1119"/>
    </location>
</feature>
<feature type="transmembrane region" description="Helical" evidence="2">
    <location>
        <begin position="1126"/>
        <end position="1146"/>
    </location>
</feature>
<feature type="transmembrane region" description="Helical" evidence="2">
    <location>
        <begin position="1181"/>
        <end position="1201"/>
    </location>
</feature>
<feature type="transmembrane region" description="Helical" evidence="2">
    <location>
        <begin position="1208"/>
        <end position="1228"/>
    </location>
</feature>
<feature type="transmembrane region" description="Helical" evidence="2">
    <location>
        <begin position="1238"/>
        <end position="1258"/>
    </location>
</feature>
<feature type="transmembrane region" description="Helical" evidence="2">
    <location>
        <begin position="1269"/>
        <end position="1289"/>
    </location>
</feature>
<feature type="transmembrane region" description="Helical" evidence="2">
    <location>
        <begin position="1322"/>
        <end position="1342"/>
    </location>
</feature>
<feature type="domain" description="ABC transporter 1" evidence="3">
    <location>
        <begin position="85"/>
        <end position="357"/>
    </location>
</feature>
<feature type="domain" description="ABC transmembrane type-2 1" evidence="8">
    <location>
        <begin position="434"/>
        <end position="647"/>
    </location>
</feature>
<feature type="domain" description="ABC transporter 2" evidence="3">
    <location>
        <begin position="749"/>
        <end position="1001"/>
    </location>
</feature>
<feature type="domain" description="ABC transmembrane type-2 2" evidence="8">
    <location>
        <begin position="1074"/>
        <end position="1288"/>
    </location>
</feature>
<feature type="region of interest" description="Disordered" evidence="4">
    <location>
        <begin position="1"/>
        <end position="23"/>
    </location>
</feature>
<feature type="binding site" evidence="3">
    <location>
        <begin position="118"/>
        <end position="125"/>
    </location>
    <ligand>
        <name>ATP</name>
        <dbReference type="ChEBI" id="CHEBI:30616"/>
        <label>1</label>
    </ligand>
</feature>
<feature type="binding site" evidence="3">
    <location>
        <begin position="794"/>
        <end position="801"/>
    </location>
    <ligand>
        <name>ATP</name>
        <dbReference type="ChEBI" id="CHEBI:30616"/>
        <label>2</label>
    </ligand>
</feature>
<gene>
    <name evidence="7" type="primary">ABCG45</name>
    <name evidence="5 6" type="synonym">PDR1</name>
    <name evidence="10" type="ordered locus">Os08g0544400</name>
    <name type="ordered locus">LOC_Os08g43120</name>
    <name evidence="9" type="ORF">P0623F08.24</name>
</gene>